<comment type="similarity">
    <text evidence="1">Belongs to the UPF0325 family.</text>
</comment>
<sequence length="128" mass="15094">MYDNLKSLGITNPEEIDRYSLRQEANNDILKIYFQKDRGEFFAKSVKFKYPRQRKTVVADGIGQGYKEVQEISPNLRYVIDELDQICQRDRSELDLKRKILDDLRHLESVVANKISEIEADLDKLTRK</sequence>
<accession>B5F8S5</accession>
<gene>
    <name evidence="1" type="primary">yaeH</name>
    <name type="ordered locus">SeAg_B0250</name>
</gene>
<feature type="chain" id="PRO_1000198435" description="UPF0325 protein YaeH">
    <location>
        <begin position="1"/>
        <end position="128"/>
    </location>
</feature>
<evidence type="ECO:0000255" key="1">
    <source>
        <dbReference type="HAMAP-Rule" id="MF_01519"/>
    </source>
</evidence>
<organism>
    <name type="scientific">Salmonella agona (strain SL483)</name>
    <dbReference type="NCBI Taxonomy" id="454166"/>
    <lineage>
        <taxon>Bacteria</taxon>
        <taxon>Pseudomonadati</taxon>
        <taxon>Pseudomonadota</taxon>
        <taxon>Gammaproteobacteria</taxon>
        <taxon>Enterobacterales</taxon>
        <taxon>Enterobacteriaceae</taxon>
        <taxon>Salmonella</taxon>
    </lineage>
</organism>
<name>YAEH_SALA4</name>
<dbReference type="EMBL" id="CP001138">
    <property type="protein sequence ID" value="ACH48644.1"/>
    <property type="molecule type" value="Genomic_DNA"/>
</dbReference>
<dbReference type="RefSeq" id="WP_000272193.1">
    <property type="nucleotide sequence ID" value="NC_011149.1"/>
</dbReference>
<dbReference type="SMR" id="B5F8S5"/>
<dbReference type="KEGG" id="sea:SeAg_B0250"/>
<dbReference type="HOGENOM" id="CLU_136774_0_0_6"/>
<dbReference type="Proteomes" id="UP000008819">
    <property type="component" value="Chromosome"/>
</dbReference>
<dbReference type="HAMAP" id="MF_01519">
    <property type="entry name" value="UPF0325"/>
    <property type="match status" value="1"/>
</dbReference>
<dbReference type="InterPro" id="IPR020911">
    <property type="entry name" value="UPF0325"/>
</dbReference>
<dbReference type="NCBIfam" id="NF010213">
    <property type="entry name" value="PRK13677.1"/>
    <property type="match status" value="1"/>
</dbReference>
<dbReference type="Pfam" id="PF11944">
    <property type="entry name" value="DUF3461"/>
    <property type="match status" value="1"/>
</dbReference>
<reference key="1">
    <citation type="journal article" date="2011" name="J. Bacteriol.">
        <title>Comparative genomics of 28 Salmonella enterica isolates: evidence for CRISPR-mediated adaptive sublineage evolution.</title>
        <authorList>
            <person name="Fricke W.F."/>
            <person name="Mammel M.K."/>
            <person name="McDermott P.F."/>
            <person name="Tartera C."/>
            <person name="White D.G."/>
            <person name="Leclerc J.E."/>
            <person name="Ravel J."/>
            <person name="Cebula T.A."/>
        </authorList>
    </citation>
    <scope>NUCLEOTIDE SEQUENCE [LARGE SCALE GENOMIC DNA]</scope>
    <source>
        <strain>SL483</strain>
    </source>
</reference>
<protein>
    <recommendedName>
        <fullName evidence="1">UPF0325 protein YaeH</fullName>
    </recommendedName>
</protein>
<proteinExistence type="inferred from homology"/>